<protein>
    <recommendedName>
        <fullName evidence="1">Small ribosomal subunit protein bS16</fullName>
    </recommendedName>
    <alternativeName>
        <fullName evidence="3">30S ribosomal protein S16</fullName>
    </alternativeName>
</protein>
<keyword id="KW-0687">Ribonucleoprotein</keyword>
<keyword id="KW-0689">Ribosomal protein</keyword>
<sequence>MALKIRLARGGSKKRPYYHVVLADARSPRDGRFLENLGSWNPMLAKDDEKRVQLNAERIKHWIEHGAQPTDRVLRFLDEAGVAKREVKNNPVKAKPGKRAQERAAEKAQKVADAAAAAADAAE</sequence>
<evidence type="ECO:0000255" key="1">
    <source>
        <dbReference type="HAMAP-Rule" id="MF_00385"/>
    </source>
</evidence>
<evidence type="ECO:0000256" key="2">
    <source>
        <dbReference type="SAM" id="MobiDB-lite"/>
    </source>
</evidence>
<evidence type="ECO:0000305" key="3"/>
<gene>
    <name evidence="1" type="primary">rpsP</name>
    <name type="ordered locus">RL4549</name>
</gene>
<proteinExistence type="inferred from homology"/>
<reference key="1">
    <citation type="journal article" date="2006" name="Genome Biol.">
        <title>The genome of Rhizobium leguminosarum has recognizable core and accessory components.</title>
        <authorList>
            <person name="Young J.P.W."/>
            <person name="Crossman L.C."/>
            <person name="Johnston A.W.B."/>
            <person name="Thomson N.R."/>
            <person name="Ghazoui Z.F."/>
            <person name="Hull K.H."/>
            <person name="Wexler M."/>
            <person name="Curson A.R.J."/>
            <person name="Todd J.D."/>
            <person name="Poole P.S."/>
            <person name="Mauchline T.H."/>
            <person name="East A.K."/>
            <person name="Quail M.A."/>
            <person name="Churcher C."/>
            <person name="Arrowsmith C."/>
            <person name="Cherevach I."/>
            <person name="Chillingworth T."/>
            <person name="Clarke K."/>
            <person name="Cronin A."/>
            <person name="Davis P."/>
            <person name="Fraser A."/>
            <person name="Hance Z."/>
            <person name="Hauser H."/>
            <person name="Jagels K."/>
            <person name="Moule S."/>
            <person name="Mungall K."/>
            <person name="Norbertczak H."/>
            <person name="Rabbinowitsch E."/>
            <person name="Sanders M."/>
            <person name="Simmonds M."/>
            <person name="Whitehead S."/>
            <person name="Parkhill J."/>
        </authorList>
    </citation>
    <scope>NUCLEOTIDE SEQUENCE [LARGE SCALE GENOMIC DNA]</scope>
    <source>
        <strain>DSM 114642 / LMG 32736 / 3841</strain>
    </source>
</reference>
<name>RS16_RHIJ3</name>
<comment type="similarity">
    <text evidence="1">Belongs to the bacterial ribosomal protein bS16 family.</text>
</comment>
<organism>
    <name type="scientific">Rhizobium johnstonii (strain DSM 114642 / LMG 32736 / 3841)</name>
    <name type="common">Rhizobium leguminosarum bv. viciae</name>
    <dbReference type="NCBI Taxonomy" id="216596"/>
    <lineage>
        <taxon>Bacteria</taxon>
        <taxon>Pseudomonadati</taxon>
        <taxon>Pseudomonadota</taxon>
        <taxon>Alphaproteobacteria</taxon>
        <taxon>Hyphomicrobiales</taxon>
        <taxon>Rhizobiaceae</taxon>
        <taxon>Rhizobium/Agrobacterium group</taxon>
        <taxon>Rhizobium</taxon>
        <taxon>Rhizobium johnstonii</taxon>
    </lineage>
</organism>
<dbReference type="EMBL" id="AM236080">
    <property type="protein sequence ID" value="CAK10033.1"/>
    <property type="molecule type" value="Genomic_DNA"/>
</dbReference>
<dbReference type="RefSeq" id="WP_003543667.1">
    <property type="nucleotide sequence ID" value="NC_008380.1"/>
</dbReference>
<dbReference type="SMR" id="Q1MAK5"/>
<dbReference type="EnsemblBacteria" id="CAK10033">
    <property type="protein sequence ID" value="CAK10033"/>
    <property type="gene ID" value="RL4549"/>
</dbReference>
<dbReference type="GeneID" id="84672188"/>
<dbReference type="KEGG" id="rle:RL4549"/>
<dbReference type="eggNOG" id="COG0228">
    <property type="taxonomic scope" value="Bacteria"/>
</dbReference>
<dbReference type="HOGENOM" id="CLU_100590_3_1_5"/>
<dbReference type="Proteomes" id="UP000006575">
    <property type="component" value="Chromosome"/>
</dbReference>
<dbReference type="GO" id="GO:0005737">
    <property type="term" value="C:cytoplasm"/>
    <property type="evidence" value="ECO:0007669"/>
    <property type="project" value="UniProtKB-ARBA"/>
</dbReference>
<dbReference type="GO" id="GO:0015935">
    <property type="term" value="C:small ribosomal subunit"/>
    <property type="evidence" value="ECO:0007669"/>
    <property type="project" value="TreeGrafter"/>
</dbReference>
<dbReference type="GO" id="GO:0003735">
    <property type="term" value="F:structural constituent of ribosome"/>
    <property type="evidence" value="ECO:0007669"/>
    <property type="project" value="InterPro"/>
</dbReference>
<dbReference type="GO" id="GO:0006412">
    <property type="term" value="P:translation"/>
    <property type="evidence" value="ECO:0007669"/>
    <property type="project" value="UniProtKB-UniRule"/>
</dbReference>
<dbReference type="Gene3D" id="3.30.1320.10">
    <property type="match status" value="1"/>
</dbReference>
<dbReference type="HAMAP" id="MF_00385">
    <property type="entry name" value="Ribosomal_bS16"/>
    <property type="match status" value="1"/>
</dbReference>
<dbReference type="InterPro" id="IPR000307">
    <property type="entry name" value="Ribosomal_bS16"/>
</dbReference>
<dbReference type="InterPro" id="IPR023803">
    <property type="entry name" value="Ribosomal_bS16_dom_sf"/>
</dbReference>
<dbReference type="NCBIfam" id="TIGR00002">
    <property type="entry name" value="S16"/>
    <property type="match status" value="1"/>
</dbReference>
<dbReference type="PANTHER" id="PTHR12919">
    <property type="entry name" value="30S RIBOSOMAL PROTEIN S16"/>
    <property type="match status" value="1"/>
</dbReference>
<dbReference type="PANTHER" id="PTHR12919:SF20">
    <property type="entry name" value="SMALL RIBOSOMAL SUBUNIT PROTEIN BS16M"/>
    <property type="match status" value="1"/>
</dbReference>
<dbReference type="Pfam" id="PF00886">
    <property type="entry name" value="Ribosomal_S16"/>
    <property type="match status" value="1"/>
</dbReference>
<dbReference type="SUPFAM" id="SSF54565">
    <property type="entry name" value="Ribosomal protein S16"/>
    <property type="match status" value="1"/>
</dbReference>
<feature type="chain" id="PRO_1000049327" description="Small ribosomal subunit protein bS16">
    <location>
        <begin position="1"/>
        <end position="123"/>
    </location>
</feature>
<feature type="region of interest" description="Disordered" evidence="2">
    <location>
        <begin position="87"/>
        <end position="123"/>
    </location>
</feature>
<feature type="compositionally biased region" description="Basic and acidic residues" evidence="2">
    <location>
        <begin position="99"/>
        <end position="110"/>
    </location>
</feature>
<feature type="compositionally biased region" description="Low complexity" evidence="2">
    <location>
        <begin position="111"/>
        <end position="123"/>
    </location>
</feature>
<accession>Q1MAK5</accession>